<reference key="1">
    <citation type="journal article" date="1997" name="Nature">
        <title>Molecular basis of symbiosis between Rhizobium and legumes.</title>
        <authorList>
            <person name="Freiberg C.A."/>
            <person name="Fellay R."/>
            <person name="Bairoch A."/>
            <person name="Broughton W.J."/>
            <person name="Rosenthal A."/>
            <person name="Perret X."/>
        </authorList>
    </citation>
    <scope>NUCLEOTIDE SEQUENCE [LARGE SCALE GENOMIC DNA]</scope>
    <source>
        <strain>NBRC 101917 / NGR234</strain>
    </source>
</reference>
<reference key="2">
    <citation type="journal article" date="2009" name="Appl. Environ. Microbiol.">
        <title>Rhizobium sp. strain NGR234 possesses a remarkable number of secretion systems.</title>
        <authorList>
            <person name="Schmeisser C."/>
            <person name="Liesegang H."/>
            <person name="Krysciak D."/>
            <person name="Bakkou N."/>
            <person name="Le Quere A."/>
            <person name="Wollherr A."/>
            <person name="Heinemeyer I."/>
            <person name="Morgenstern B."/>
            <person name="Pommerening-Roeser A."/>
            <person name="Flores M."/>
            <person name="Palacios R."/>
            <person name="Brenner S."/>
            <person name="Gottschalk G."/>
            <person name="Schmitz R.A."/>
            <person name="Broughton W.J."/>
            <person name="Perret X."/>
            <person name="Strittmatter A.W."/>
            <person name="Streit W.R."/>
        </authorList>
    </citation>
    <scope>NUCLEOTIDE SEQUENCE [LARGE SCALE GENOMIC DNA]</scope>
    <source>
        <strain>NBRC 101917 / NGR234</strain>
    </source>
</reference>
<feature type="chain" id="PRO_0000200834" description="Uncharacterized protein y4fB">
    <location>
        <begin position="1"/>
        <end position="664"/>
    </location>
</feature>
<dbReference type="EMBL" id="U00090">
    <property type="protein sequence ID" value="AAB91659.1"/>
    <property type="molecule type" value="Genomic_DNA"/>
</dbReference>
<dbReference type="RefSeq" id="NP_443847.1">
    <property type="nucleotide sequence ID" value="NC_000914.2"/>
</dbReference>
<dbReference type="RefSeq" id="WP_010875391.1">
    <property type="nucleotide sequence ID" value="NC_000914.2"/>
</dbReference>
<dbReference type="SMR" id="P55440"/>
<dbReference type="KEGG" id="rhi:NGR_a03790"/>
<dbReference type="PATRIC" id="fig|394.7.peg.387"/>
<dbReference type="eggNOG" id="COG1864">
    <property type="taxonomic scope" value="Bacteria"/>
</dbReference>
<dbReference type="eggNOG" id="COG3591">
    <property type="taxonomic scope" value="Bacteria"/>
</dbReference>
<dbReference type="HOGENOM" id="CLU_016161_0_0_5"/>
<dbReference type="OrthoDB" id="9811262at2"/>
<dbReference type="Proteomes" id="UP000001054">
    <property type="component" value="Plasmid pNGR234a"/>
</dbReference>
<dbReference type="GO" id="GO:0004519">
    <property type="term" value="F:endonuclease activity"/>
    <property type="evidence" value="ECO:0007669"/>
    <property type="project" value="TreeGrafter"/>
</dbReference>
<dbReference type="GO" id="GO:0046872">
    <property type="term" value="F:metal ion binding"/>
    <property type="evidence" value="ECO:0007669"/>
    <property type="project" value="InterPro"/>
</dbReference>
<dbReference type="GO" id="GO:0003676">
    <property type="term" value="F:nucleic acid binding"/>
    <property type="evidence" value="ECO:0007669"/>
    <property type="project" value="InterPro"/>
</dbReference>
<dbReference type="CDD" id="cd00091">
    <property type="entry name" value="NUC"/>
    <property type="match status" value="1"/>
</dbReference>
<dbReference type="Gene3D" id="3.40.570.10">
    <property type="entry name" value="Extracellular Endonuclease, subunit A"/>
    <property type="match status" value="1"/>
</dbReference>
<dbReference type="Gene3D" id="2.40.10.10">
    <property type="entry name" value="Trypsin-like serine proteases"/>
    <property type="match status" value="2"/>
</dbReference>
<dbReference type="InterPro" id="IPR044929">
    <property type="entry name" value="DNA/RNA_non-sp_Endonuclease_sf"/>
</dbReference>
<dbReference type="InterPro" id="IPR001604">
    <property type="entry name" value="Endo_G_ENPP1-like_dom"/>
</dbReference>
<dbReference type="InterPro" id="IPR020821">
    <property type="entry name" value="ENPP1-3/EXOG-like_nuc-like"/>
</dbReference>
<dbReference type="InterPro" id="IPR044925">
    <property type="entry name" value="His-Me_finger_sf"/>
</dbReference>
<dbReference type="InterPro" id="IPR040255">
    <property type="entry name" value="Non-specific_endonuclease"/>
</dbReference>
<dbReference type="InterPro" id="IPR009003">
    <property type="entry name" value="Peptidase_S1_PA"/>
</dbReference>
<dbReference type="InterPro" id="IPR043504">
    <property type="entry name" value="Peptidase_S1_PA_chymotrypsin"/>
</dbReference>
<dbReference type="PANTHER" id="PTHR13966:SF5">
    <property type="entry name" value="ENDONUCLEASE G, MITOCHONDRIAL"/>
    <property type="match status" value="1"/>
</dbReference>
<dbReference type="PANTHER" id="PTHR13966">
    <property type="entry name" value="ENDONUCLEASE RELATED"/>
    <property type="match status" value="1"/>
</dbReference>
<dbReference type="Pfam" id="PF01223">
    <property type="entry name" value="Endonuclease_NS"/>
    <property type="match status" value="1"/>
</dbReference>
<dbReference type="Pfam" id="PF13365">
    <property type="entry name" value="Trypsin_2"/>
    <property type="match status" value="1"/>
</dbReference>
<dbReference type="SMART" id="SM00892">
    <property type="entry name" value="Endonuclease_NS"/>
    <property type="match status" value="1"/>
</dbReference>
<dbReference type="SMART" id="SM00477">
    <property type="entry name" value="NUC"/>
    <property type="match status" value="1"/>
</dbReference>
<dbReference type="SUPFAM" id="SSF54060">
    <property type="entry name" value="His-Me finger endonucleases"/>
    <property type="match status" value="1"/>
</dbReference>
<dbReference type="SUPFAM" id="SSF50494">
    <property type="entry name" value="Trypsin-like serine proteases"/>
    <property type="match status" value="1"/>
</dbReference>
<accession>P55440</accession>
<geneLocation type="plasmid">
    <name>sym pNGR234a</name>
</geneLocation>
<organism>
    <name type="scientific">Sinorhizobium fredii (strain NBRC 101917 / NGR234)</name>
    <dbReference type="NCBI Taxonomy" id="394"/>
    <lineage>
        <taxon>Bacteria</taxon>
        <taxon>Pseudomonadati</taxon>
        <taxon>Pseudomonadota</taxon>
        <taxon>Alphaproteobacteria</taxon>
        <taxon>Hyphomicrobiales</taxon>
        <taxon>Rhizobiaceae</taxon>
        <taxon>Sinorhizobium/Ensifer group</taxon>
        <taxon>Sinorhizobium</taxon>
    </lineage>
</organism>
<protein>
    <recommendedName>
        <fullName>Uncharacterized protein y4fB</fullName>
    </recommendedName>
</protein>
<sequence length="664" mass="73732">MEISKFADEQLADQIAAGREAVPEVDPIRLIEQVVHRARAGAGVDFDVFESLIGEIDLVEINYLERGLMASRAVCRINVPAPVGDSSDWGTGFLIGPRLLLTNNHVIDSAEDALKATVEFGYELDAEGRLKRTTRFRLSPQDGFVTSPRDALDYTVVAIEENSEDGATPISDFGFLRLDARTGKTEVGQYATIIQHPDAKTKRISLRENKFVKYGDEADPERDNFLWYSSDTANGSSGAAVFTDAWQVVCLHHAGVPDRRMIDGKEHWVLTDKTTAPARIAINLPVDKVHWLANEGVRISKLIADVQERIAAPGFARSTLVDDLVADATGVKAFAGTTPGESIVGPPLVAAPALRLVAAEARRRPTRHTHPANYFDGREGYRSDFLPVEIPLPTLGVNALRHGSPAKVTGAADDVLRYQHFSVVLNANPKRKMAFYTAVNIDGARWTNLERGNDVWFYDPRIPEELQNGDELYGDEPVPSKNYFDRGHLVRRLDPVWGEIRVAKQANDDTFQWTNCSPQYWGFNQGADLWQGLENFLLYNTDDENVQASVFSGPLFRADDEEHRGILIPQFFWKVIAVTDKNDRLYTSGYMVSQQDYALDIPFERLPVGPNSTKPGQNFQVPVAKIIEDTGIVFADEILSADAYSGPSTGRALRTVADIQHPRR</sequence>
<keyword id="KW-0614">Plasmid</keyword>
<keyword id="KW-1185">Reference proteome</keyword>
<gene>
    <name type="ordered locus">NGR_a03790</name>
    <name type="ORF">y4fB</name>
</gene>
<name>Y4FB_SINFN</name>
<proteinExistence type="predicted"/>